<proteinExistence type="evidence at protein level"/>
<reference key="1">
    <citation type="journal article" date="2008" name="J. Agric. Food Chem.">
        <title>Cloning and characterization of monacolin K biosynthetic gene cluster from Monascus pilosus.</title>
        <authorList>
            <person name="Chen Y.P."/>
            <person name="Tseng C.P."/>
            <person name="Liaw L.L."/>
            <person name="Wang C.L."/>
            <person name="Chen I.C."/>
            <person name="Wu W.J."/>
            <person name="Wu M.D."/>
            <person name="Yuan G.F."/>
        </authorList>
    </citation>
    <scope>NUCLEOTIDE SEQUENCE [GENOMIC DNA]</scope>
    <scope>FUNCTION</scope>
</reference>
<reference key="2">
    <citation type="journal article" date="2009" name="Biotechnol. Lett.">
        <title>Identification of mokB involved in monacolin K biosynthesis in Monascus pilosus.</title>
        <authorList>
            <person name="Sakai K."/>
            <person name="Kinoshita H."/>
            <person name="Nihira T."/>
        </authorList>
    </citation>
    <scope>FUNCTION</scope>
</reference>
<reference key="3">
    <citation type="journal article" date="2010" name="J. Agric. Food Chem.">
        <title>Identification of the mokH gene encoding transcription factor for the upregulation of monacolin K biosynthesis in Monascus pilosus.</title>
        <authorList>
            <person name="Chen Y.-P."/>
            <person name="Yuan G.-F."/>
            <person name="Hsieh S.-Y."/>
            <person name="Lin Y.-S."/>
            <person name="Wang W.-Y."/>
            <person name="Liaw L.-L."/>
            <person name="Tseng C.-P."/>
        </authorList>
    </citation>
    <scope>INDUCTION</scope>
</reference>
<reference key="4">
    <citation type="journal article" date="2011" name="Biosci. Biotechnol. Biochem.">
        <title>Simultaneous enrichment of deglycosylated ginsenosides and monacolin K in red ginseng by fermentation with Monascus pilosus.</title>
        <authorList>
            <person name="Hong S.Y."/>
            <person name="Oh J.H."/>
            <person name="Lee I."/>
        </authorList>
    </citation>
    <scope>BIOTECHNOLOGY</scope>
</reference>
<feature type="chain" id="PRO_0000436285" description="Dehydrogenase mokE">
    <location>
        <begin position="1"/>
        <end position="360"/>
    </location>
</feature>
<feature type="binding site" evidence="2">
    <location>
        <begin position="50"/>
        <end position="53"/>
    </location>
    <ligand>
        <name>NADP(+)</name>
        <dbReference type="ChEBI" id="CHEBI:58349"/>
    </ligand>
</feature>
<feature type="binding site" evidence="3">
    <location>
        <begin position="134"/>
        <end position="141"/>
    </location>
    <ligand>
        <name>substrate</name>
    </ligand>
</feature>
<feature type="binding site" evidence="2">
    <location>
        <begin position="173"/>
        <end position="176"/>
    </location>
    <ligand>
        <name>NADP(+)</name>
        <dbReference type="ChEBI" id="CHEBI:58349"/>
    </ligand>
</feature>
<feature type="binding site" evidence="2">
    <location>
        <begin position="196"/>
        <end position="199"/>
    </location>
    <ligand>
        <name>NADP(+)</name>
        <dbReference type="ChEBI" id="CHEBI:58349"/>
    </ligand>
</feature>
<feature type="binding site" evidence="2">
    <location>
        <position position="214"/>
    </location>
    <ligand>
        <name>NADP(+)</name>
        <dbReference type="ChEBI" id="CHEBI:58349"/>
    </ligand>
</feature>
<feature type="binding site" evidence="2">
    <location>
        <begin position="261"/>
        <end position="262"/>
    </location>
    <ligand>
        <name>NADP(+)</name>
        <dbReference type="ChEBI" id="CHEBI:58349"/>
    </ligand>
</feature>
<feature type="binding site" evidence="2">
    <location>
        <position position="279"/>
    </location>
    <ligand>
        <name>NADP(+)</name>
        <dbReference type="ChEBI" id="CHEBI:58349"/>
    </ligand>
</feature>
<feature type="binding site" evidence="3">
    <location>
        <begin position="281"/>
        <end position="285"/>
    </location>
    <ligand>
        <name>substrate</name>
    </ligand>
</feature>
<feature type="binding site" evidence="2">
    <location>
        <begin position="350"/>
        <end position="351"/>
    </location>
    <ligand>
        <name>NADP(+)</name>
        <dbReference type="ChEBI" id="CHEBI:58349"/>
    </ligand>
</feature>
<gene>
    <name evidence="6" type="primary">mokE</name>
</gene>
<dbReference type="EC" id="1.-.-.-" evidence="8"/>
<dbReference type="EMBL" id="DQ176595">
    <property type="protein sequence ID" value="ABA02243.1"/>
    <property type="molecule type" value="Genomic_DNA"/>
</dbReference>
<dbReference type="SMR" id="Q3S2U1"/>
<dbReference type="UniPathway" id="UPA00875"/>
<dbReference type="GO" id="GO:0000166">
    <property type="term" value="F:nucleotide binding"/>
    <property type="evidence" value="ECO:0007669"/>
    <property type="project" value="UniProtKB-KW"/>
</dbReference>
<dbReference type="GO" id="GO:0016651">
    <property type="term" value="F:oxidoreductase activity, acting on NAD(P)H"/>
    <property type="evidence" value="ECO:0007669"/>
    <property type="project" value="InterPro"/>
</dbReference>
<dbReference type="CDD" id="cd08249">
    <property type="entry name" value="enoyl_reductase_like"/>
    <property type="match status" value="1"/>
</dbReference>
<dbReference type="Gene3D" id="3.90.180.10">
    <property type="entry name" value="Medium-chain alcohol dehydrogenases, catalytic domain"/>
    <property type="match status" value="1"/>
</dbReference>
<dbReference type="Gene3D" id="3.40.50.720">
    <property type="entry name" value="NAD(P)-binding Rossmann-like Domain"/>
    <property type="match status" value="1"/>
</dbReference>
<dbReference type="InterPro" id="IPR013149">
    <property type="entry name" value="ADH-like_C"/>
</dbReference>
<dbReference type="InterPro" id="IPR013154">
    <property type="entry name" value="ADH-like_N"/>
</dbReference>
<dbReference type="InterPro" id="IPR011032">
    <property type="entry name" value="GroES-like_sf"/>
</dbReference>
<dbReference type="InterPro" id="IPR036291">
    <property type="entry name" value="NAD(P)-bd_dom_sf"/>
</dbReference>
<dbReference type="InterPro" id="IPR020843">
    <property type="entry name" value="PKS_ER"/>
</dbReference>
<dbReference type="InterPro" id="IPR047122">
    <property type="entry name" value="Trans-enoyl_RdTase-like"/>
</dbReference>
<dbReference type="PANTHER" id="PTHR45348">
    <property type="entry name" value="HYPOTHETICAL OXIDOREDUCTASE (EUROFUNG)"/>
    <property type="match status" value="1"/>
</dbReference>
<dbReference type="PANTHER" id="PTHR45348:SF2">
    <property type="entry name" value="ZINC-TYPE ALCOHOL DEHYDROGENASE-LIKE PROTEIN C2E1P3.01"/>
    <property type="match status" value="1"/>
</dbReference>
<dbReference type="Pfam" id="PF08240">
    <property type="entry name" value="ADH_N"/>
    <property type="match status" value="1"/>
</dbReference>
<dbReference type="Pfam" id="PF00107">
    <property type="entry name" value="ADH_zinc_N"/>
    <property type="match status" value="1"/>
</dbReference>
<dbReference type="SMART" id="SM00829">
    <property type="entry name" value="PKS_ER"/>
    <property type="match status" value="1"/>
</dbReference>
<dbReference type="SUPFAM" id="SSF50129">
    <property type="entry name" value="GroES-like"/>
    <property type="match status" value="1"/>
</dbReference>
<dbReference type="SUPFAM" id="SSF51735">
    <property type="entry name" value="NAD(P)-binding Rossmann-fold domains"/>
    <property type="match status" value="1"/>
</dbReference>
<comment type="function">
    <text evidence="1 6 7">Dehydrogenase; part of the gene cluster that mediates the biosynthesis of monakolin K, also known as lovastatin, and which acts as a potent competitive inhibitor of HMG-CoA reductase (PubMed:18578535). Monakolin K biosynthesis is performed in two stages (PubMed:19693441). The first stage is catalyzed by the nonaketide synthase mokA, which belongs to type I polyketide synthases and catalyzes the iterative nine-step formation of the polyketide (PubMed:18578535, PubMed:19693441). This PKS stage is completed by the action of dehydrogenase mokE, which catalyzes the NADPH-dependent reduction of the unsaturated tetra-, penta- and heptaketide intermediates that arise during the mokA-mediated biosynthesis of the nonaketide chain and leads to dihydromonacolin L (PubMed:19693441). Covalently bound dihydromonacolin L is released from mokA by the mokD esterase (By similarity). Conversion of dihydromonacolin L into monacolin L and then monacolin J is subsequently performed with the participation of molecular oxygen and P450 monoogygenase mokC (PubMed:19693441). Finally, mokF performs the conversion of monacoline J to monacoline K through the addition of the side-chain diketide moiety (2R)-2-methylbutanoate produced by the diketide synthase mokB (PubMed:19693441).</text>
</comment>
<comment type="pathway">
    <text evidence="2">Polyketide biosynthesis; lovastatin biosynthesis.</text>
</comment>
<comment type="subunit">
    <text evidence="2">Monomer.</text>
</comment>
<comment type="induction">
    <text evidence="4">Expression is controlled by the monacolin K cluster transcription regulator mokH (PubMed:19968298).</text>
</comment>
<comment type="biotechnology">
    <text evidence="5">Monacoline K acts as an inhibitor of HMG-CoA reductase involved in cholesterogenesis (PubMed:21821946). Its hypocholesterolemic activity might be useful for lowering cholesterol levels in the blood and reduce artherosclerosis and coronary heart disease (PubMed:21821946).</text>
</comment>
<comment type="similarity">
    <text evidence="8">Belongs to the zinc-containing alcohol dehydrogenase family.</text>
</comment>
<protein>
    <recommendedName>
        <fullName evidence="6">Dehydrogenase mokE</fullName>
        <ecNumber evidence="8">1.-.-.-</ecNumber>
    </recommendedName>
    <alternativeName>
        <fullName evidence="2">Enoyl reductase</fullName>
    </alternativeName>
    <alternativeName>
        <fullName evidence="6">Monacolin K biosynthesis protein E</fullName>
    </alternativeName>
</protein>
<keyword id="KW-0521">NADP</keyword>
<keyword id="KW-0547">Nucleotide-binding</keyword>
<keyword id="KW-0560">Oxidoreductase</keyword>
<evidence type="ECO:0000250" key="1">
    <source>
        <dbReference type="UniProtKB" id="Q0C8M2"/>
    </source>
</evidence>
<evidence type="ECO:0000250" key="2">
    <source>
        <dbReference type="UniProtKB" id="Q9Y7D0"/>
    </source>
</evidence>
<evidence type="ECO:0000255" key="3"/>
<evidence type="ECO:0000269" key="4">
    <source>
    </source>
</evidence>
<evidence type="ECO:0000269" key="5">
    <source>
    </source>
</evidence>
<evidence type="ECO:0000303" key="6">
    <source>
    </source>
</evidence>
<evidence type="ECO:0000303" key="7">
    <source>
    </source>
</evidence>
<evidence type="ECO:0000305" key="8"/>
<evidence type="ECO:0000312" key="9">
    <source>
        <dbReference type="EMBL" id="ABA02243.1"/>
    </source>
</evidence>
<name>MOKE_MONPI</name>
<accession>Q3S2U1</accession>
<sequence length="360" mass="38845">MTITFTLPPHQTALTVDEHDKVTIWDVAPCPSLPPDQVCVRVEAVALNPSDTKMRGQFATPYAFLGTDYAGTVVAVGSQVTHIQVGDRVYGAQNEMCPRTPDQGAFSQYTVTRGRIWATVPEGWSFEQAASLPAGISTAGLAMKLLGLPLPDPNATTAPALPKPVYVLVYGGSTATATIVMQMLRLSGYIPIATCSPHNFDLAKKHGAEDVFDYRDAGLAQTIRTYTKNNLRYALDCITNVESTTLCFAAIGRAGGRYVSLNPFPEHAATRKMVTADWTLGPTIFGEGSTWPAPYGRPGSEKDRAFGEELWRVAARLVEDGKIVHHPLRVIPGGFEAIKQGMELVRTGQLSGEKVVVKLG</sequence>
<organism evidence="9">
    <name type="scientific">Monascus pilosus</name>
    <name type="common">Red mold</name>
    <dbReference type="NCBI Taxonomy" id="89488"/>
    <lineage>
        <taxon>Eukaryota</taxon>
        <taxon>Fungi</taxon>
        <taxon>Dikarya</taxon>
        <taxon>Ascomycota</taxon>
        <taxon>Pezizomycotina</taxon>
        <taxon>Eurotiomycetes</taxon>
        <taxon>Eurotiomycetidae</taxon>
        <taxon>Eurotiales</taxon>
        <taxon>Aspergillaceae</taxon>
        <taxon>Monascus</taxon>
    </lineage>
</organism>